<feature type="chain" id="PRO_1000001045" description="Dihydroxy-acid dehydratase">
    <location>
        <begin position="1"/>
        <end position="619"/>
    </location>
</feature>
<feature type="active site" description="Proton acceptor" evidence="1">
    <location>
        <position position="517"/>
    </location>
</feature>
<feature type="binding site" evidence="1">
    <location>
        <position position="81"/>
    </location>
    <ligand>
        <name>Mg(2+)</name>
        <dbReference type="ChEBI" id="CHEBI:18420"/>
    </ligand>
</feature>
<feature type="binding site" evidence="1">
    <location>
        <position position="122"/>
    </location>
    <ligand>
        <name>[2Fe-2S] cluster</name>
        <dbReference type="ChEBI" id="CHEBI:190135"/>
    </ligand>
</feature>
<feature type="binding site" evidence="1">
    <location>
        <position position="123"/>
    </location>
    <ligand>
        <name>Mg(2+)</name>
        <dbReference type="ChEBI" id="CHEBI:18420"/>
    </ligand>
</feature>
<feature type="binding site" description="via carbamate group" evidence="1">
    <location>
        <position position="124"/>
    </location>
    <ligand>
        <name>Mg(2+)</name>
        <dbReference type="ChEBI" id="CHEBI:18420"/>
    </ligand>
</feature>
<feature type="binding site" evidence="1">
    <location>
        <position position="195"/>
    </location>
    <ligand>
        <name>[2Fe-2S] cluster</name>
        <dbReference type="ChEBI" id="CHEBI:190135"/>
    </ligand>
</feature>
<feature type="binding site" evidence="1">
    <location>
        <position position="491"/>
    </location>
    <ligand>
        <name>Mg(2+)</name>
        <dbReference type="ChEBI" id="CHEBI:18420"/>
    </ligand>
</feature>
<feature type="modified residue" description="N6-carboxylysine" evidence="1">
    <location>
        <position position="124"/>
    </location>
</feature>
<accession>Q2ISQ1</accession>
<comment type="function">
    <text evidence="1">Functions in the biosynthesis of branched-chain amino acids. Catalyzes the dehydration of (2R,3R)-2,3-dihydroxy-3-methylpentanoate (2,3-dihydroxy-3-methylvalerate) into 2-oxo-3-methylpentanoate (2-oxo-3-methylvalerate) and of (2R)-2,3-dihydroxy-3-methylbutanoate (2,3-dihydroxyisovalerate) into 2-oxo-3-methylbutanoate (2-oxoisovalerate), the penultimate precursor to L-isoleucine and L-valine, respectively.</text>
</comment>
<comment type="catalytic activity">
    <reaction evidence="1">
        <text>(2R)-2,3-dihydroxy-3-methylbutanoate = 3-methyl-2-oxobutanoate + H2O</text>
        <dbReference type="Rhea" id="RHEA:24809"/>
        <dbReference type="ChEBI" id="CHEBI:11851"/>
        <dbReference type="ChEBI" id="CHEBI:15377"/>
        <dbReference type="ChEBI" id="CHEBI:49072"/>
        <dbReference type="EC" id="4.2.1.9"/>
    </reaction>
    <physiologicalReaction direction="left-to-right" evidence="1">
        <dbReference type="Rhea" id="RHEA:24810"/>
    </physiologicalReaction>
</comment>
<comment type="catalytic activity">
    <reaction evidence="1">
        <text>(2R,3R)-2,3-dihydroxy-3-methylpentanoate = (S)-3-methyl-2-oxopentanoate + H2O</text>
        <dbReference type="Rhea" id="RHEA:27694"/>
        <dbReference type="ChEBI" id="CHEBI:15377"/>
        <dbReference type="ChEBI" id="CHEBI:35146"/>
        <dbReference type="ChEBI" id="CHEBI:49258"/>
        <dbReference type="EC" id="4.2.1.9"/>
    </reaction>
    <physiologicalReaction direction="left-to-right" evidence="1">
        <dbReference type="Rhea" id="RHEA:27695"/>
    </physiologicalReaction>
</comment>
<comment type="cofactor">
    <cofactor evidence="1">
        <name>[2Fe-2S] cluster</name>
        <dbReference type="ChEBI" id="CHEBI:190135"/>
    </cofactor>
    <text evidence="1">Binds 1 [2Fe-2S] cluster per subunit. This cluster acts as a Lewis acid cofactor.</text>
</comment>
<comment type="cofactor">
    <cofactor evidence="1">
        <name>Mg(2+)</name>
        <dbReference type="ChEBI" id="CHEBI:18420"/>
    </cofactor>
</comment>
<comment type="pathway">
    <text evidence="1">Amino-acid biosynthesis; L-isoleucine biosynthesis; L-isoleucine from 2-oxobutanoate: step 3/4.</text>
</comment>
<comment type="pathway">
    <text evidence="1">Amino-acid biosynthesis; L-valine biosynthesis; L-valine from pyruvate: step 3/4.</text>
</comment>
<comment type="subunit">
    <text evidence="1">Homodimer.</text>
</comment>
<comment type="similarity">
    <text evidence="1">Belongs to the IlvD/Edd family.</text>
</comment>
<dbReference type="EC" id="4.2.1.9" evidence="1"/>
<dbReference type="EMBL" id="CP000250">
    <property type="protein sequence ID" value="ABD08759.1"/>
    <property type="molecule type" value="Genomic_DNA"/>
</dbReference>
<dbReference type="RefSeq" id="WP_011442943.1">
    <property type="nucleotide sequence ID" value="NC_007778.1"/>
</dbReference>
<dbReference type="SMR" id="Q2ISQ1"/>
<dbReference type="STRING" id="316058.RPB_4066"/>
<dbReference type="KEGG" id="rpb:RPB_4066"/>
<dbReference type="eggNOG" id="COG0129">
    <property type="taxonomic scope" value="Bacteria"/>
</dbReference>
<dbReference type="HOGENOM" id="CLU_014271_4_3_5"/>
<dbReference type="OrthoDB" id="7793094at2"/>
<dbReference type="UniPathway" id="UPA00047">
    <property type="reaction ID" value="UER00057"/>
</dbReference>
<dbReference type="UniPathway" id="UPA00049">
    <property type="reaction ID" value="UER00061"/>
</dbReference>
<dbReference type="Proteomes" id="UP000008809">
    <property type="component" value="Chromosome"/>
</dbReference>
<dbReference type="GO" id="GO:0005829">
    <property type="term" value="C:cytosol"/>
    <property type="evidence" value="ECO:0007669"/>
    <property type="project" value="TreeGrafter"/>
</dbReference>
<dbReference type="GO" id="GO:0051537">
    <property type="term" value="F:2 iron, 2 sulfur cluster binding"/>
    <property type="evidence" value="ECO:0007669"/>
    <property type="project" value="UniProtKB-UniRule"/>
</dbReference>
<dbReference type="GO" id="GO:0004160">
    <property type="term" value="F:dihydroxy-acid dehydratase activity"/>
    <property type="evidence" value="ECO:0007669"/>
    <property type="project" value="UniProtKB-UniRule"/>
</dbReference>
<dbReference type="GO" id="GO:0000287">
    <property type="term" value="F:magnesium ion binding"/>
    <property type="evidence" value="ECO:0007669"/>
    <property type="project" value="UniProtKB-UniRule"/>
</dbReference>
<dbReference type="GO" id="GO:0009097">
    <property type="term" value="P:isoleucine biosynthetic process"/>
    <property type="evidence" value="ECO:0007669"/>
    <property type="project" value="UniProtKB-UniRule"/>
</dbReference>
<dbReference type="GO" id="GO:0009099">
    <property type="term" value="P:L-valine biosynthetic process"/>
    <property type="evidence" value="ECO:0007669"/>
    <property type="project" value="UniProtKB-UniRule"/>
</dbReference>
<dbReference type="FunFam" id="3.50.30.80:FF:000001">
    <property type="entry name" value="Dihydroxy-acid dehydratase"/>
    <property type="match status" value="1"/>
</dbReference>
<dbReference type="Gene3D" id="3.50.30.80">
    <property type="entry name" value="IlvD/EDD C-terminal domain-like"/>
    <property type="match status" value="1"/>
</dbReference>
<dbReference type="HAMAP" id="MF_00012">
    <property type="entry name" value="IlvD"/>
    <property type="match status" value="1"/>
</dbReference>
<dbReference type="InterPro" id="IPR042096">
    <property type="entry name" value="Dihydro-acid_dehy_C"/>
</dbReference>
<dbReference type="InterPro" id="IPR004404">
    <property type="entry name" value="DihydroxyA_deHydtase"/>
</dbReference>
<dbReference type="InterPro" id="IPR020558">
    <property type="entry name" value="DiOHA_6PGluconate_deHydtase_CS"/>
</dbReference>
<dbReference type="InterPro" id="IPR056740">
    <property type="entry name" value="ILV_EDD_C"/>
</dbReference>
<dbReference type="InterPro" id="IPR000581">
    <property type="entry name" value="ILV_EDD_N"/>
</dbReference>
<dbReference type="InterPro" id="IPR037237">
    <property type="entry name" value="IlvD/EDD_N"/>
</dbReference>
<dbReference type="NCBIfam" id="TIGR00110">
    <property type="entry name" value="ilvD"/>
    <property type="match status" value="1"/>
</dbReference>
<dbReference type="NCBIfam" id="NF009103">
    <property type="entry name" value="PRK12448.1"/>
    <property type="match status" value="1"/>
</dbReference>
<dbReference type="PANTHER" id="PTHR43661">
    <property type="entry name" value="D-XYLONATE DEHYDRATASE"/>
    <property type="match status" value="1"/>
</dbReference>
<dbReference type="PANTHER" id="PTHR43661:SF3">
    <property type="entry name" value="D-XYLONATE DEHYDRATASE YAGF-RELATED"/>
    <property type="match status" value="1"/>
</dbReference>
<dbReference type="Pfam" id="PF24877">
    <property type="entry name" value="ILV_EDD_C"/>
    <property type="match status" value="1"/>
</dbReference>
<dbReference type="Pfam" id="PF00920">
    <property type="entry name" value="ILVD_EDD_N"/>
    <property type="match status" value="1"/>
</dbReference>
<dbReference type="SUPFAM" id="SSF143975">
    <property type="entry name" value="IlvD/EDD N-terminal domain-like"/>
    <property type="match status" value="1"/>
</dbReference>
<dbReference type="SUPFAM" id="SSF52016">
    <property type="entry name" value="LeuD/IlvD-like"/>
    <property type="match status" value="1"/>
</dbReference>
<dbReference type="PROSITE" id="PS00886">
    <property type="entry name" value="ILVD_EDD_1"/>
    <property type="match status" value="1"/>
</dbReference>
<dbReference type="PROSITE" id="PS00887">
    <property type="entry name" value="ILVD_EDD_2"/>
    <property type="match status" value="1"/>
</dbReference>
<keyword id="KW-0001">2Fe-2S</keyword>
<keyword id="KW-0028">Amino-acid biosynthesis</keyword>
<keyword id="KW-0100">Branched-chain amino acid biosynthesis</keyword>
<keyword id="KW-0408">Iron</keyword>
<keyword id="KW-0411">Iron-sulfur</keyword>
<keyword id="KW-0456">Lyase</keyword>
<keyword id="KW-0460">Magnesium</keyword>
<keyword id="KW-0479">Metal-binding</keyword>
<keyword id="KW-1185">Reference proteome</keyword>
<name>ILVD_RHOP2</name>
<sequence>MPAYRSRTTTHGRNMAGARGLWRATGMKDSDFGKPIIAVVNSFTQFVPGHVHLKDLGQLVAREIEAAGGVAKEFNTIAVDDGIAMGHDGMLYSLPSRELIADSVEYMVNAHCADAMVCISNCDKITPGMLMAAMRLNIPAVFVSGGPMEAGKVVLKGKTHAVDLIDAMVAAADSSMSDEDVQTMERSACPTCGSCSGMFTANSMNCLAEALGLALPGNGSVLATHADRKRLFVEAGHTIVDLARRYYEGDDESVLPRKVASFEAFENAMTLDIAMGGSTNTVLHLLAAAREAELDFSMKDIDRLSRKVPCLSKIAPSVSDVHMEDVHRAGGIMAILGELDRAGLIHNSCPTVHSETLGAALARWDIRQSNSEAVRTFYRAAPGGVPTQVAFSQDRRYDELDLDRQKGVIRDAEHAFSKDGGLAVLYGNIALDGCIVKTAGVDASILTFSGPAKVFESQDDAVSAILGNKIVAGDVIVIRYEGPRGGPGMQEMLYPTSYLKSKGLGKACALITDGRFSGGTSGLSIGHVSPEAAEGGLIGLVRNGDRISIDIPNRGITLDVAADELSRRAEEEEAKGDKAWQPKDRKRKVSAALQAYAMLTTSAANGAVRDVNRRLGKGK</sequence>
<reference key="1">
    <citation type="submission" date="2006-01" db="EMBL/GenBank/DDBJ databases">
        <title>Complete sequence of Rhodopseudomonas palustris HaA2.</title>
        <authorList>
            <consortium name="US DOE Joint Genome Institute"/>
            <person name="Copeland A."/>
            <person name="Lucas S."/>
            <person name="Lapidus A."/>
            <person name="Barry K."/>
            <person name="Detter J.C."/>
            <person name="Glavina T."/>
            <person name="Hammon N."/>
            <person name="Israni S."/>
            <person name="Pitluck S."/>
            <person name="Chain P."/>
            <person name="Malfatti S."/>
            <person name="Shin M."/>
            <person name="Vergez L."/>
            <person name="Schmutz J."/>
            <person name="Larimer F."/>
            <person name="Land M."/>
            <person name="Hauser L."/>
            <person name="Pelletier D.A."/>
            <person name="Kyrpides N."/>
            <person name="Anderson I."/>
            <person name="Oda Y."/>
            <person name="Harwood C.S."/>
            <person name="Richardson P."/>
        </authorList>
    </citation>
    <scope>NUCLEOTIDE SEQUENCE [LARGE SCALE GENOMIC DNA]</scope>
    <source>
        <strain>HaA2</strain>
    </source>
</reference>
<gene>
    <name evidence="1" type="primary">ilvD</name>
    <name type="ordered locus">RPB_4066</name>
</gene>
<protein>
    <recommendedName>
        <fullName evidence="1">Dihydroxy-acid dehydratase</fullName>
        <shortName evidence="1">DAD</shortName>
        <ecNumber evidence="1">4.2.1.9</ecNumber>
    </recommendedName>
</protein>
<evidence type="ECO:0000255" key="1">
    <source>
        <dbReference type="HAMAP-Rule" id="MF_00012"/>
    </source>
</evidence>
<organism>
    <name type="scientific">Rhodopseudomonas palustris (strain HaA2)</name>
    <dbReference type="NCBI Taxonomy" id="316058"/>
    <lineage>
        <taxon>Bacteria</taxon>
        <taxon>Pseudomonadati</taxon>
        <taxon>Pseudomonadota</taxon>
        <taxon>Alphaproteobacteria</taxon>
        <taxon>Hyphomicrobiales</taxon>
        <taxon>Nitrobacteraceae</taxon>
        <taxon>Rhodopseudomonas</taxon>
    </lineage>
</organism>
<proteinExistence type="inferred from homology"/>